<name>ZN827_HUMAN</name>
<organism>
    <name type="scientific">Homo sapiens</name>
    <name type="common">Human</name>
    <dbReference type="NCBI Taxonomy" id="9606"/>
    <lineage>
        <taxon>Eukaryota</taxon>
        <taxon>Metazoa</taxon>
        <taxon>Chordata</taxon>
        <taxon>Craniata</taxon>
        <taxon>Vertebrata</taxon>
        <taxon>Euteleostomi</taxon>
        <taxon>Mammalia</taxon>
        <taxon>Eutheria</taxon>
        <taxon>Euarchontoglires</taxon>
        <taxon>Primates</taxon>
        <taxon>Haplorrhini</taxon>
        <taxon>Catarrhini</taxon>
        <taxon>Hominidae</taxon>
        <taxon>Homo</taxon>
    </lineage>
</organism>
<accession>Q17R98</accession>
<accession>B7ZL52</accession>
<accession>Q7Z4S7</accession>
<accession>Q8N279</accession>
<gene>
    <name type="primary">ZNF827</name>
</gene>
<comment type="function">
    <text evidence="3 5">As part of a ribonucleoprotein complex composed at least of HNRNPK, HNRNPL and the circular RNA circZNF827 that nucleates the complex on chromatin, may negatively regulate the transcription of genes involved in neuronal differentiation (PubMed:33174841). Could also recruit the nucleosome remodeling and histone deacetylase/NuRD complex to telomeric regions of chromosomes to regulate chromatin remodeling as part of telomere maintenance (PubMed:25150861).</text>
</comment>
<comment type="subunit">
    <text evidence="3 4 5">Part of a transcription inhibitory ribonucleoprotein complex composed at least of the circular RNA circZNF827, HNRNPK and HNRNPL (PubMed:33174841). Interacts with the nucleosome remodeling and histone deacetylase/NuRD complex (PubMed:25150861). Interacts with RBBP4; the interaction is direct and recruits RBBP4, a component of the NuRD complex, to telomeres (PubMed:30045876).</text>
</comment>
<comment type="interaction">
    <interactant intactId="EBI-5564776">
        <id>Q17R98</id>
    </interactant>
    <interactant intactId="EBI-372916">
        <id>Q14839</id>
        <label>CHD4</label>
    </interactant>
    <organismsDiffer>false</organismsDiffer>
    <experiments>2</experiments>
</comment>
<comment type="interaction">
    <interactant intactId="EBI-5564776">
        <id>Q17R98</id>
    </interactant>
    <interactant intactId="EBI-923440">
        <id>Q8WXI9</id>
        <label>GATAD2B</label>
    </interactant>
    <organismsDiffer>false</organismsDiffer>
    <experiments>2</experiments>
</comment>
<comment type="interaction">
    <interactant intactId="EBI-5564776">
        <id>Q17R98</id>
    </interactant>
    <interactant intactId="EBI-301821">
        <id>Q92769</id>
        <label>HDAC2</label>
    </interactant>
    <organismsDiffer>false</organismsDiffer>
    <experiments>2</experiments>
</comment>
<comment type="interaction">
    <interactant intactId="EBI-5564776">
        <id>Q17R98</id>
    </interactant>
    <interactant intactId="EBI-6165891">
        <id>Q14696</id>
        <label>MESD</label>
    </interactant>
    <organismsDiffer>false</organismsDiffer>
    <experiments>3</experiments>
</comment>
<comment type="interaction">
    <interactant intactId="EBI-5564776">
        <id>Q17R98</id>
    </interactant>
    <interactant intactId="EBI-1783035">
        <id>O94776</id>
        <label>MTA2</label>
    </interactant>
    <organismsDiffer>false</organismsDiffer>
    <experiments>2</experiments>
</comment>
<comment type="interaction">
    <interactant intactId="EBI-5564776">
        <id>Q17R98</id>
    </interactant>
    <interactant intactId="EBI-352227">
        <id>Q16576</id>
        <label>RBBP7</label>
    </interactant>
    <organismsDiffer>false</organismsDiffer>
    <experiments>2</experiments>
</comment>
<comment type="subcellular location">
    <subcellularLocation>
        <location evidence="9">Nucleus</location>
    </subcellularLocation>
    <subcellularLocation>
        <location evidence="3 4">Chromosome</location>
        <location evidence="3 4">Telomere</location>
    </subcellularLocation>
</comment>
<comment type="alternative products">
    <event type="alternative splicing"/>
    <isoform>
        <id>Q17R98-1</id>
        <name>1</name>
        <sequence type="displayed"/>
    </isoform>
    <isoform>
        <id>Q17R98-2</id>
        <name>2</name>
        <sequence type="described" ref="VSP_032464 VSP_032465"/>
    </isoform>
    <isoform>
        <id>Q17R98-3</id>
        <name>3</name>
        <sequence type="described" ref="VSP_032463"/>
    </isoform>
</comment>
<comment type="similarity">
    <text evidence="8">Belongs to the krueppel C2H2-type zinc-finger protein family.</text>
</comment>
<comment type="caution">
    <text evidence="3">The function in telomere maintenance is inferred from experiments in cells displaying alternative lengthening of telomeres/ALT a process specific of cancer cells.</text>
</comment>
<dbReference type="EMBL" id="AF450485">
    <property type="protein sequence ID" value="AAP97679.1"/>
    <property type="molecule type" value="mRNA"/>
</dbReference>
<dbReference type="EMBL" id="AK091130">
    <property type="protein sequence ID" value="BAC03591.1"/>
    <property type="molecule type" value="mRNA"/>
</dbReference>
<dbReference type="EMBL" id="BC117407">
    <property type="protein sequence ID" value="AAI17408.1"/>
    <property type="molecule type" value="mRNA"/>
</dbReference>
<dbReference type="EMBL" id="BC143577">
    <property type="protein sequence ID" value="AAI43578.1"/>
    <property type="molecule type" value="mRNA"/>
</dbReference>
<dbReference type="CCDS" id="CCDS34072.1">
    <molecule id="Q17R98-2"/>
</dbReference>
<dbReference type="CCDS" id="CCDS77968.1">
    <molecule id="Q17R98-1"/>
</dbReference>
<dbReference type="RefSeq" id="NP_001293144.1">
    <molecule id="Q17R98-1"/>
    <property type="nucleotide sequence ID" value="NM_001306215.2"/>
</dbReference>
<dbReference type="RefSeq" id="NP_849157.2">
    <molecule id="Q17R98-2"/>
    <property type="nucleotide sequence ID" value="NM_178835.5"/>
</dbReference>
<dbReference type="RefSeq" id="XP_016863261.1">
    <property type="nucleotide sequence ID" value="XM_017007772.1"/>
</dbReference>
<dbReference type="RefSeq" id="XP_016863262.1">
    <property type="nucleotide sequence ID" value="XM_017007773.1"/>
</dbReference>
<dbReference type="RefSeq" id="XP_016863263.1">
    <property type="nucleotide sequence ID" value="XM_017007774.1"/>
</dbReference>
<dbReference type="RefSeq" id="XP_016863264.1">
    <molecule id="Q17R98-2"/>
    <property type="nucleotide sequence ID" value="XM_017007775.3"/>
</dbReference>
<dbReference type="RefSeq" id="XP_054204957.1">
    <molecule id="Q17R98-2"/>
    <property type="nucleotide sequence ID" value="XM_054348982.1"/>
</dbReference>
<dbReference type="PDB" id="5XXQ">
    <property type="method" value="X-ray"/>
    <property type="resolution" value="1.90 A"/>
    <property type="chains" value="C/D=1-14"/>
</dbReference>
<dbReference type="PDBsum" id="5XXQ"/>
<dbReference type="SMR" id="Q17R98"/>
<dbReference type="BioGRID" id="127447">
    <property type="interactions" value="28"/>
</dbReference>
<dbReference type="DIP" id="DIP-61048N"/>
<dbReference type="FunCoup" id="Q17R98">
    <property type="interactions" value="759"/>
</dbReference>
<dbReference type="IntAct" id="Q17R98">
    <property type="interactions" value="18"/>
</dbReference>
<dbReference type="MINT" id="Q17R98"/>
<dbReference type="STRING" id="9606.ENSP00000421863"/>
<dbReference type="GlyCosmos" id="Q17R98">
    <property type="glycosylation" value="2 sites, 1 glycan"/>
</dbReference>
<dbReference type="GlyGen" id="Q17R98">
    <property type="glycosylation" value="3 sites, 1 O-linked glycan (3 sites)"/>
</dbReference>
<dbReference type="iPTMnet" id="Q17R98"/>
<dbReference type="PhosphoSitePlus" id="Q17R98"/>
<dbReference type="SwissPalm" id="Q17R98"/>
<dbReference type="BioMuta" id="ZNF827"/>
<dbReference type="DMDM" id="121945543"/>
<dbReference type="jPOST" id="Q17R98"/>
<dbReference type="MassIVE" id="Q17R98"/>
<dbReference type="PaxDb" id="9606-ENSP00000368761"/>
<dbReference type="PeptideAtlas" id="Q17R98"/>
<dbReference type="ProteomicsDB" id="61138">
    <molecule id="Q17R98-1"/>
</dbReference>
<dbReference type="ProteomicsDB" id="61139">
    <molecule id="Q17R98-2"/>
</dbReference>
<dbReference type="ProteomicsDB" id="61140">
    <molecule id="Q17R98-3"/>
</dbReference>
<dbReference type="Antibodypedia" id="56760">
    <property type="antibodies" value="21 antibodies from 10 providers"/>
</dbReference>
<dbReference type="DNASU" id="152485"/>
<dbReference type="Ensembl" id="ENST00000379448.9">
    <molecule id="Q17R98-2"/>
    <property type="protein sequence ID" value="ENSP00000368761.4"/>
    <property type="gene ID" value="ENSG00000151612.18"/>
</dbReference>
<dbReference type="Ensembl" id="ENST00000508784.6">
    <molecule id="Q17R98-1"/>
    <property type="protein sequence ID" value="ENSP00000421863.1"/>
    <property type="gene ID" value="ENSG00000151612.18"/>
</dbReference>
<dbReference type="Ensembl" id="ENST00000656985.1">
    <molecule id="Q17R98-2"/>
    <property type="protein sequence ID" value="ENSP00000499364.1"/>
    <property type="gene ID" value="ENSG00000151612.18"/>
</dbReference>
<dbReference type="GeneID" id="152485"/>
<dbReference type="KEGG" id="hsa:152485"/>
<dbReference type="MANE-Select" id="ENST00000508784.6">
    <property type="protein sequence ID" value="ENSP00000421863.1"/>
    <property type="RefSeq nucleotide sequence ID" value="NM_001306215.2"/>
    <property type="RefSeq protein sequence ID" value="NP_001293144.1"/>
</dbReference>
<dbReference type="UCSC" id="uc003ikm.4">
    <molecule id="Q17R98-1"/>
    <property type="organism name" value="human"/>
</dbReference>
<dbReference type="AGR" id="HGNC:27193"/>
<dbReference type="CTD" id="152485"/>
<dbReference type="DisGeNET" id="152485"/>
<dbReference type="GeneCards" id="ZNF827"/>
<dbReference type="HGNC" id="HGNC:27193">
    <property type="gene designation" value="ZNF827"/>
</dbReference>
<dbReference type="HPA" id="ENSG00000151612">
    <property type="expression patterns" value="Low tissue specificity"/>
</dbReference>
<dbReference type="MIM" id="617962">
    <property type="type" value="gene"/>
</dbReference>
<dbReference type="neXtProt" id="NX_Q17R98"/>
<dbReference type="OpenTargets" id="ENSG00000151612"/>
<dbReference type="PharmGKB" id="PA162410714"/>
<dbReference type="VEuPathDB" id="HostDB:ENSG00000151612"/>
<dbReference type="eggNOG" id="KOG1721">
    <property type="taxonomic scope" value="Eukaryota"/>
</dbReference>
<dbReference type="GeneTree" id="ENSGT00940000156063"/>
<dbReference type="HOGENOM" id="CLU_005602_0_0_1"/>
<dbReference type="InParanoid" id="Q17R98"/>
<dbReference type="OMA" id="CGECLFK"/>
<dbReference type="OrthoDB" id="6910977at2759"/>
<dbReference type="PAN-GO" id="Q17R98">
    <property type="GO annotations" value="2 GO annotations based on evolutionary models"/>
</dbReference>
<dbReference type="PhylomeDB" id="Q17R98"/>
<dbReference type="TreeFam" id="TF333046"/>
<dbReference type="PathwayCommons" id="Q17R98"/>
<dbReference type="SignaLink" id="Q17R98"/>
<dbReference type="BioGRID-ORCS" id="152485">
    <property type="hits" value="12 hits in 1172 CRISPR screens"/>
</dbReference>
<dbReference type="ChiTaRS" id="ZNF827">
    <property type="organism name" value="human"/>
</dbReference>
<dbReference type="GenomeRNAi" id="152485"/>
<dbReference type="Pharos" id="Q17R98">
    <property type="development level" value="Tdark"/>
</dbReference>
<dbReference type="PRO" id="PR:Q17R98"/>
<dbReference type="Proteomes" id="UP000005640">
    <property type="component" value="Chromosome 4"/>
</dbReference>
<dbReference type="RNAct" id="Q17R98">
    <property type="molecule type" value="protein"/>
</dbReference>
<dbReference type="Bgee" id="ENSG00000151612">
    <property type="expression patterns" value="Expressed in buccal mucosa cell and 198 other cell types or tissues"/>
</dbReference>
<dbReference type="ExpressionAtlas" id="Q17R98">
    <property type="expression patterns" value="baseline and differential"/>
</dbReference>
<dbReference type="GO" id="GO:0000785">
    <property type="term" value="C:chromatin"/>
    <property type="evidence" value="ECO:0000314"/>
    <property type="project" value="UniProtKB"/>
</dbReference>
<dbReference type="GO" id="GO:0000781">
    <property type="term" value="C:chromosome, telomeric region"/>
    <property type="evidence" value="ECO:0000314"/>
    <property type="project" value="UniProtKB"/>
</dbReference>
<dbReference type="GO" id="GO:0005634">
    <property type="term" value="C:nucleus"/>
    <property type="evidence" value="ECO:0000318"/>
    <property type="project" value="GO_Central"/>
</dbReference>
<dbReference type="GO" id="GO:1990904">
    <property type="term" value="C:ribonucleoprotein complex"/>
    <property type="evidence" value="ECO:0000314"/>
    <property type="project" value="UniProtKB"/>
</dbReference>
<dbReference type="GO" id="GO:0003677">
    <property type="term" value="F:DNA binding"/>
    <property type="evidence" value="ECO:0007669"/>
    <property type="project" value="UniProtKB-KW"/>
</dbReference>
<dbReference type="GO" id="GO:0120325">
    <property type="term" value="F:NuRD complex binding"/>
    <property type="evidence" value="ECO:0000314"/>
    <property type="project" value="UniProtKB"/>
</dbReference>
<dbReference type="GO" id="GO:0008270">
    <property type="term" value="F:zinc ion binding"/>
    <property type="evidence" value="ECO:0007669"/>
    <property type="project" value="UniProtKB-KW"/>
</dbReference>
<dbReference type="GO" id="GO:0006338">
    <property type="term" value="P:chromatin remodeling"/>
    <property type="evidence" value="ECO:0000315"/>
    <property type="project" value="UniProtKB"/>
</dbReference>
<dbReference type="GO" id="GO:0070200">
    <property type="term" value="P:establishment of protein localization to telomere"/>
    <property type="evidence" value="ECO:0000315"/>
    <property type="project" value="UniProtKB"/>
</dbReference>
<dbReference type="GO" id="GO:0045892">
    <property type="term" value="P:negative regulation of DNA-templated transcription"/>
    <property type="evidence" value="ECO:0000315"/>
    <property type="project" value="UniProtKB"/>
</dbReference>
<dbReference type="GO" id="GO:1904791">
    <property type="term" value="P:negative regulation of shelterin complex assembly"/>
    <property type="evidence" value="ECO:0000315"/>
    <property type="project" value="UniProtKB"/>
</dbReference>
<dbReference type="GO" id="GO:0045944">
    <property type="term" value="P:positive regulation of transcription by RNA polymerase II"/>
    <property type="evidence" value="ECO:0000318"/>
    <property type="project" value="GO_Central"/>
</dbReference>
<dbReference type="GO" id="GO:0000723">
    <property type="term" value="P:telomere maintenance"/>
    <property type="evidence" value="ECO:0000315"/>
    <property type="project" value="UniProtKB"/>
</dbReference>
<dbReference type="FunFam" id="3.30.160.60:FF:000272">
    <property type="entry name" value="Zinc finger protein 827"/>
    <property type="match status" value="1"/>
</dbReference>
<dbReference type="FunFam" id="3.30.160.60:FF:000415">
    <property type="entry name" value="Zinc finger protein 827"/>
    <property type="match status" value="1"/>
</dbReference>
<dbReference type="FunFam" id="3.30.160.60:FF:000435">
    <property type="entry name" value="Zinc finger protein 827"/>
    <property type="match status" value="1"/>
</dbReference>
<dbReference type="FunFam" id="3.30.160.60:FF:002599">
    <property type="entry name" value="Zinc finger protein 827"/>
    <property type="match status" value="1"/>
</dbReference>
<dbReference type="FunFam" id="3.30.160.60:FF:000484">
    <property type="entry name" value="zinc finger protein 827 isoform X1"/>
    <property type="match status" value="1"/>
</dbReference>
<dbReference type="Gene3D" id="3.30.160.60">
    <property type="entry name" value="Classic Zinc Finger"/>
    <property type="match status" value="5"/>
</dbReference>
<dbReference type="InterPro" id="IPR050688">
    <property type="entry name" value="Zinc_finger/UBP_domain"/>
</dbReference>
<dbReference type="InterPro" id="IPR036236">
    <property type="entry name" value="Znf_C2H2_sf"/>
</dbReference>
<dbReference type="InterPro" id="IPR013087">
    <property type="entry name" value="Znf_C2H2_type"/>
</dbReference>
<dbReference type="PANTHER" id="PTHR24403">
    <property type="entry name" value="ZINC FINGER PROTEIN"/>
    <property type="match status" value="1"/>
</dbReference>
<dbReference type="PANTHER" id="PTHR24403:SF62">
    <property type="entry name" value="ZINC FINGER PROTEIN 827"/>
    <property type="match status" value="1"/>
</dbReference>
<dbReference type="Pfam" id="PF00096">
    <property type="entry name" value="zf-C2H2"/>
    <property type="match status" value="3"/>
</dbReference>
<dbReference type="SMART" id="SM00355">
    <property type="entry name" value="ZnF_C2H2"/>
    <property type="match status" value="9"/>
</dbReference>
<dbReference type="SUPFAM" id="SSF57667">
    <property type="entry name" value="beta-beta-alpha zinc fingers"/>
    <property type="match status" value="3"/>
</dbReference>
<dbReference type="SUPFAM" id="SSF101447">
    <property type="entry name" value="Formin homology 2 domain (FH2 domain)"/>
    <property type="match status" value="1"/>
</dbReference>
<dbReference type="PROSITE" id="PS00028">
    <property type="entry name" value="ZINC_FINGER_C2H2_1"/>
    <property type="match status" value="5"/>
</dbReference>
<dbReference type="PROSITE" id="PS50157">
    <property type="entry name" value="ZINC_FINGER_C2H2_2"/>
    <property type="match status" value="5"/>
</dbReference>
<sequence length="1081" mass="119165">MPRRKQEQPKRLPSHVSRQEEAEGELSEGEHWYGNSSETPSEASYGEVQENYKLSLEDRIQEQSTSPDTSLGSTTPSSHTLELVALDSEVLRDSLQCQDHLSPGVSSLCDDDPGSNKPLSSNLRRLLEAGSLKLDAAATANGRVESPVNVGSNLSFSPPSHHAQQLSVLARKLAEKQEQNDQYTPSNRFIWNQGKWLPNSTTTCSLSPDSAILKLKAAANAVLQDKSLTRTEETMRFESFSSPFSSQSASSTLAALSKKVSERSLTPGQEHPPPASSFLSLASMTSSAALLKEVAARAAGSLLAEKSSLLPEDPLPPPPSEKKPEKVTPPPPPPPPPPPPPPPQSLELLLLPVPKGRVSKPSNSASEEESGKPFQCPICGLVIKRKSYWKRHMVIHTGLKSHQCPLCPFRCARKDNLKSHMKVHQHQDRGETFQCQLCPFTSSRHFSLKLHMRCHQHFLRTEAKVKEEIPDPDVKGSPHLSDSACLGQQREGGGTELVGTMMTSNTPERTSQGGAGVSPLLVKEEPKEDNGLPTSFTLNAADRPANHTKLKDPSEYVANSASALFSQDISVKMASDFLMKLSAANQKEPMNLNFKVKEEPKEGESLSTTLPRSSYVFSPESEVSAPGVSEDALKPQEGKGSVLRRDVSVKAASELLMKLSAESYKETQMVKIKEEPMEVDIQDSHVSISPSRNVGYSTLIGREKTEPLQKMPEGRVPPERNLFSQDISVKMASELLFQLSEKVSKEHNHTKENTIRTTTSPFFSEDTFRQSPFTSNSKELLPSDSVLHGRISAPETEKIVLEAGNGLPSWKFNDQLFPCDVCGKVFGRQQTLSRHLSLHTEERKYKCHLCPYAAKCRANLNQHLTVHSVKLVSTDTEDIVSAVTSEGSDGKKHPYYYSCHVCGFETELNVQFVSHMSLHVDKEQWMFSICCTACDFVTMEEAEIKTHIGTKHTGEDRKTPSESNSPSSSSLSALSDSANSKDDSDGSQKNKGGNNLLVISVMPGSQPSLNSEEKPEKGFECVFCNFVCKTKNMFERHLQIHLITRMFECDVCHKFMKTPEQLLEHKKCHTVPTGGLNSGQW</sequence>
<proteinExistence type="evidence at protein level"/>
<reference key="1">
    <citation type="submission" date="2001-11" db="EMBL/GenBank/DDBJ databases">
        <authorList>
            <person name="Zan Q."/>
            <person name="Guo J.H."/>
            <person name="Yu L."/>
        </authorList>
    </citation>
    <scope>NUCLEOTIDE SEQUENCE [LARGE SCALE MRNA] (ISOFORM 3)</scope>
    <source>
        <tissue>Lymph</tissue>
    </source>
</reference>
<reference key="2">
    <citation type="journal article" date="2004" name="Nat. Genet.">
        <title>Complete sequencing and characterization of 21,243 full-length human cDNAs.</title>
        <authorList>
            <person name="Ota T."/>
            <person name="Suzuki Y."/>
            <person name="Nishikawa T."/>
            <person name="Otsuki T."/>
            <person name="Sugiyama T."/>
            <person name="Irie R."/>
            <person name="Wakamatsu A."/>
            <person name="Hayashi K."/>
            <person name="Sato H."/>
            <person name="Nagai K."/>
            <person name="Kimura K."/>
            <person name="Makita H."/>
            <person name="Sekine M."/>
            <person name="Obayashi M."/>
            <person name="Nishi T."/>
            <person name="Shibahara T."/>
            <person name="Tanaka T."/>
            <person name="Ishii S."/>
            <person name="Yamamoto J."/>
            <person name="Saito K."/>
            <person name="Kawai Y."/>
            <person name="Isono Y."/>
            <person name="Nakamura Y."/>
            <person name="Nagahari K."/>
            <person name="Murakami K."/>
            <person name="Yasuda T."/>
            <person name="Iwayanagi T."/>
            <person name="Wagatsuma M."/>
            <person name="Shiratori A."/>
            <person name="Sudo H."/>
            <person name="Hosoiri T."/>
            <person name="Kaku Y."/>
            <person name="Kodaira H."/>
            <person name="Kondo H."/>
            <person name="Sugawara M."/>
            <person name="Takahashi M."/>
            <person name="Kanda K."/>
            <person name="Yokoi T."/>
            <person name="Furuya T."/>
            <person name="Kikkawa E."/>
            <person name="Omura Y."/>
            <person name="Abe K."/>
            <person name="Kamihara K."/>
            <person name="Katsuta N."/>
            <person name="Sato K."/>
            <person name="Tanikawa M."/>
            <person name="Yamazaki M."/>
            <person name="Ninomiya K."/>
            <person name="Ishibashi T."/>
            <person name="Yamashita H."/>
            <person name="Murakawa K."/>
            <person name="Fujimori K."/>
            <person name="Tanai H."/>
            <person name="Kimata M."/>
            <person name="Watanabe M."/>
            <person name="Hiraoka S."/>
            <person name="Chiba Y."/>
            <person name="Ishida S."/>
            <person name="Ono Y."/>
            <person name="Takiguchi S."/>
            <person name="Watanabe S."/>
            <person name="Yosida M."/>
            <person name="Hotuta T."/>
            <person name="Kusano J."/>
            <person name="Kanehori K."/>
            <person name="Takahashi-Fujii A."/>
            <person name="Hara H."/>
            <person name="Tanase T.-O."/>
            <person name="Nomura Y."/>
            <person name="Togiya S."/>
            <person name="Komai F."/>
            <person name="Hara R."/>
            <person name="Takeuchi K."/>
            <person name="Arita M."/>
            <person name="Imose N."/>
            <person name="Musashino K."/>
            <person name="Yuuki H."/>
            <person name="Oshima A."/>
            <person name="Sasaki N."/>
            <person name="Aotsuka S."/>
            <person name="Yoshikawa Y."/>
            <person name="Matsunawa H."/>
            <person name="Ichihara T."/>
            <person name="Shiohata N."/>
            <person name="Sano S."/>
            <person name="Moriya S."/>
            <person name="Momiyama H."/>
            <person name="Satoh N."/>
            <person name="Takami S."/>
            <person name="Terashima Y."/>
            <person name="Suzuki O."/>
            <person name="Nakagawa S."/>
            <person name="Senoh A."/>
            <person name="Mizoguchi H."/>
            <person name="Goto Y."/>
            <person name="Shimizu F."/>
            <person name="Wakebe H."/>
            <person name="Hishigaki H."/>
            <person name="Watanabe T."/>
            <person name="Sugiyama A."/>
            <person name="Takemoto M."/>
            <person name="Kawakami B."/>
            <person name="Yamazaki M."/>
            <person name="Watanabe K."/>
            <person name="Kumagai A."/>
            <person name="Itakura S."/>
            <person name="Fukuzumi Y."/>
            <person name="Fujimori Y."/>
            <person name="Komiyama M."/>
            <person name="Tashiro H."/>
            <person name="Tanigami A."/>
            <person name="Fujiwara T."/>
            <person name="Ono T."/>
            <person name="Yamada K."/>
            <person name="Fujii Y."/>
            <person name="Ozaki K."/>
            <person name="Hirao M."/>
            <person name="Ohmori Y."/>
            <person name="Kawabata A."/>
            <person name="Hikiji T."/>
            <person name="Kobatake N."/>
            <person name="Inagaki H."/>
            <person name="Ikema Y."/>
            <person name="Okamoto S."/>
            <person name="Okitani R."/>
            <person name="Kawakami T."/>
            <person name="Noguchi S."/>
            <person name="Itoh T."/>
            <person name="Shigeta K."/>
            <person name="Senba T."/>
            <person name="Matsumura K."/>
            <person name="Nakajima Y."/>
            <person name="Mizuno T."/>
            <person name="Morinaga M."/>
            <person name="Sasaki M."/>
            <person name="Togashi T."/>
            <person name="Oyama M."/>
            <person name="Hata H."/>
            <person name="Watanabe M."/>
            <person name="Komatsu T."/>
            <person name="Mizushima-Sugano J."/>
            <person name="Satoh T."/>
            <person name="Shirai Y."/>
            <person name="Takahashi Y."/>
            <person name="Nakagawa K."/>
            <person name="Okumura K."/>
            <person name="Nagase T."/>
            <person name="Nomura N."/>
            <person name="Kikuchi H."/>
            <person name="Masuho Y."/>
            <person name="Yamashita R."/>
            <person name="Nakai K."/>
            <person name="Yada T."/>
            <person name="Nakamura Y."/>
            <person name="Ohara O."/>
            <person name="Isogai T."/>
            <person name="Sugano S."/>
        </authorList>
    </citation>
    <scope>NUCLEOTIDE SEQUENCE [LARGE SCALE MRNA] (ISOFORM 2)</scope>
    <source>
        <tissue>Tongue</tissue>
    </source>
</reference>
<reference key="3">
    <citation type="journal article" date="2004" name="Genome Res.">
        <title>The status, quality, and expansion of the NIH full-length cDNA project: the Mammalian Gene Collection (MGC).</title>
        <authorList>
            <consortium name="The MGC Project Team"/>
        </authorList>
    </citation>
    <scope>NUCLEOTIDE SEQUENCE [LARGE SCALE MRNA] (ISOFORM 1)</scope>
    <source>
        <tissue>Liver</tissue>
    </source>
</reference>
<reference key="4">
    <citation type="journal article" date="2014" name="Nat. Struct. Mol. Biol.">
        <title>NuRD-ZNF827 recruitment to telomeres creates a molecular scaffold for homologous recombination.</title>
        <authorList>
            <person name="Conomos D."/>
            <person name="Reddel R.R."/>
            <person name="Pickett H.A."/>
        </authorList>
    </citation>
    <scope>FUNCTION</scope>
    <scope>SUBUNIT</scope>
    <scope>SUBCELLULAR LOCATION</scope>
    <scope>CAUTION</scope>
    <scope>MOTIF</scope>
    <scope>MUTAGENESIS OF 3-ARG--LYS-5</scope>
</reference>
<reference key="5">
    <citation type="journal article" date="2014" name="Nat. Struct. Mol. Biol.">
        <title>Uncovering global SUMOylation signaling networks in a site-specific manner.</title>
        <authorList>
            <person name="Hendriks I.A."/>
            <person name="D'Souza R.C."/>
            <person name="Yang B."/>
            <person name="Verlaan-de Vries M."/>
            <person name="Mann M."/>
            <person name="Vertegaal A.C."/>
        </authorList>
    </citation>
    <scope>SUMOYLATION [LARGE SCALE ANALYSIS] AT LYS-466; LYS-523 AND LYS-673</scope>
    <scope>IDENTIFICATION BY MASS SPECTROMETRY [LARGE SCALE ANALYSIS]</scope>
</reference>
<reference key="6">
    <citation type="journal article" date="2014" name="Proc. Natl. Acad. Sci. U.S.A.">
        <title>Mapping of SUMO sites and analysis of SUMOylation changes induced by external stimuli.</title>
        <authorList>
            <person name="Impens F."/>
            <person name="Radoshevich L."/>
            <person name="Cossart P."/>
            <person name="Ribet D."/>
        </authorList>
    </citation>
    <scope>SUMOYLATION [LARGE SCALE ANALYSIS] AT LYS-673</scope>
    <scope>IDENTIFICATION BY MASS SPECTROMETRY [LARGE SCALE ANALYSIS]</scope>
</reference>
<reference key="7">
    <citation type="journal article" date="2015" name="Cell Rep.">
        <title>SUMO-2 orchestrates chromatin modifiers in response to DNA damage.</title>
        <authorList>
            <person name="Hendriks I.A."/>
            <person name="Treffers L.W."/>
            <person name="Verlaan-de Vries M."/>
            <person name="Olsen J.V."/>
            <person name="Vertegaal A.C."/>
        </authorList>
    </citation>
    <scope>SUMOYLATION [LARGE SCALE ANALYSIS] AT LYS-466 AND LYS-523</scope>
    <scope>IDENTIFICATION BY MASS SPECTROMETRY [LARGE SCALE ANALYSIS]</scope>
</reference>
<reference key="8">
    <citation type="journal article" date="2015" name="Mol. Cell. Proteomics">
        <title>System-wide analysis of SUMOylation dynamics in response to replication stress reveals novel small ubiquitin-like modified target proteins and acceptor lysines relevant for genome stability.</title>
        <authorList>
            <person name="Xiao Z."/>
            <person name="Chang J.G."/>
            <person name="Hendriks I.A."/>
            <person name="Sigurdsson J.O."/>
            <person name="Olsen J.V."/>
            <person name="Vertegaal A.C."/>
        </authorList>
    </citation>
    <scope>SUMOYLATION [LARGE SCALE ANALYSIS] AT LYS-466; LYS-597; LYS-673 AND LYS-704</scope>
    <scope>IDENTIFICATION BY MASS SPECTROMETRY [LARGE SCALE ANALYSIS]</scope>
</reference>
<reference key="9">
    <citation type="journal article" date="2017" name="Nat. Struct. Mol. Biol.">
        <title>Site-specific mapping of the human SUMO proteome reveals co-modification with phosphorylation.</title>
        <authorList>
            <person name="Hendriks I.A."/>
            <person name="Lyon D."/>
            <person name="Young C."/>
            <person name="Jensen L.J."/>
            <person name="Vertegaal A.C."/>
            <person name="Nielsen M.L."/>
        </authorList>
    </citation>
    <scope>SUMOYLATION [LARGE SCALE ANALYSIS] AT LYS-176; LYS-216; LYS-226; LYS-360; LYS-372; LYS-466; LYS-475; LYS-549; LYS-580; LYS-587; LYS-634; LYS-639; LYS-658; LYS-673; LYS-704; LYS-710; LYS-742; LYS-778; LYS-798; LYS-870; LYS-891; LYS-958 AND LYS-1014</scope>
    <scope>IDENTIFICATION BY MASS SPECTROMETRY [LARGE SCALE ANALYSIS]</scope>
</reference>
<reference key="10">
    <citation type="journal article" date="2020" name="Elife">
        <title>circZNF827 nucleates a transcription inhibitory complex to balance neuronal differentiation.</title>
        <authorList>
            <person name="Hollensen A.K."/>
            <person name="Thomsen H.S."/>
            <person name="Lloret-Llinares M."/>
            <person name="Kamstrup A.B."/>
            <person name="Jensen J.M."/>
            <person name="Luckmann M."/>
            <person name="Birkmose N."/>
            <person name="Palmfeldt J."/>
            <person name="Jensen T.H."/>
            <person name="Hansen T.B."/>
            <person name="Damgaard C.K."/>
        </authorList>
    </citation>
    <scope>FUNCTION</scope>
    <scope>SUBUNIT</scope>
</reference>
<reference evidence="10" key="11">
    <citation type="journal article" date="2018" name="Biochem. J.">
        <title>Structural and functional characterization of the RBBP4-ZNF827 interaction and its role in NuRD recruitment to telomeres.</title>
        <authorList>
            <person name="Yang S.F."/>
            <person name="Sun A.A."/>
            <person name="Shi Y."/>
            <person name="Li F."/>
            <person name="Pickett H.A."/>
        </authorList>
    </citation>
    <scope>X-RAY CRYSTALLOGRAPHY (1.90 ANGSTROMS) OF 1-14 IN COMPLEX WITH RBBP4</scope>
    <scope>SUBUNIT</scope>
    <scope>SUBCELLULAR LOCATION</scope>
    <scope>REGION</scope>
    <scope>MUTAGENESIS OF ARG-4; LYS-5; GLN-6; PRO-9 AND ARG-11</scope>
</reference>
<evidence type="ECO:0000255" key="1">
    <source>
        <dbReference type="PROSITE-ProRule" id="PRU00042"/>
    </source>
</evidence>
<evidence type="ECO:0000256" key="2">
    <source>
        <dbReference type="SAM" id="MobiDB-lite"/>
    </source>
</evidence>
<evidence type="ECO:0000269" key="3">
    <source>
    </source>
</evidence>
<evidence type="ECO:0000269" key="4">
    <source>
    </source>
</evidence>
<evidence type="ECO:0000269" key="5">
    <source>
    </source>
</evidence>
<evidence type="ECO:0000303" key="6">
    <source>
    </source>
</evidence>
<evidence type="ECO:0000303" key="7">
    <source ref="1"/>
</evidence>
<evidence type="ECO:0000305" key="8"/>
<evidence type="ECO:0000305" key="9">
    <source>
    </source>
</evidence>
<evidence type="ECO:0007744" key="10">
    <source>
        <dbReference type="PDB" id="5XXQ"/>
    </source>
</evidence>
<evidence type="ECO:0007744" key="11">
    <source>
    </source>
</evidence>
<evidence type="ECO:0007744" key="12">
    <source>
    </source>
</evidence>
<evidence type="ECO:0007744" key="13">
    <source>
    </source>
</evidence>
<evidence type="ECO:0007744" key="14">
    <source>
    </source>
</evidence>
<evidence type="ECO:0007744" key="15">
    <source>
    </source>
</evidence>
<protein>
    <recommendedName>
        <fullName>Zinc finger protein 827</fullName>
    </recommendedName>
</protein>
<feature type="chain" id="PRO_0000325889" description="Zinc finger protein 827">
    <location>
        <begin position="1"/>
        <end position="1081"/>
    </location>
</feature>
<feature type="zinc finger region" description="C2H2-type 1" evidence="1">
    <location>
        <begin position="374"/>
        <end position="396"/>
    </location>
</feature>
<feature type="zinc finger region" description="C2H2-type 2" evidence="1">
    <location>
        <begin position="402"/>
        <end position="424"/>
    </location>
</feature>
<feature type="zinc finger region" description="C2H2-type 3" evidence="1">
    <location>
        <begin position="433"/>
        <end position="455"/>
    </location>
</feature>
<feature type="zinc finger region" description="C2H2-type 4" evidence="1">
    <location>
        <begin position="817"/>
        <end position="839"/>
    </location>
</feature>
<feature type="zinc finger region" description="C2H2-type 5" evidence="1">
    <location>
        <begin position="845"/>
        <end position="867"/>
    </location>
</feature>
<feature type="zinc finger region" description="C2H2-type 6" evidence="1">
    <location>
        <begin position="897"/>
        <end position="919"/>
    </location>
</feature>
<feature type="zinc finger region" description="C2H2-type 7" evidence="1">
    <location>
        <begin position="929"/>
        <end position="952"/>
    </location>
</feature>
<feature type="zinc finger region" description="C2H2-type 8" evidence="1">
    <location>
        <begin position="1019"/>
        <end position="1041"/>
    </location>
</feature>
<feature type="zinc finger region" description="C2H2-type 9" evidence="1">
    <location>
        <begin position="1047"/>
        <end position="1069"/>
    </location>
</feature>
<feature type="region of interest" description="Disordered" evidence="2">
    <location>
        <begin position="1"/>
        <end position="77"/>
    </location>
</feature>
<feature type="region of interest" description="Mediates direct interaction with RBBP4" evidence="4">
    <location>
        <begin position="1"/>
        <end position="14"/>
    </location>
</feature>
<feature type="region of interest" description="Disordered" evidence="2">
    <location>
        <begin position="259"/>
        <end position="278"/>
    </location>
</feature>
<feature type="region of interest" description="Disordered" evidence="2">
    <location>
        <begin position="307"/>
        <end position="348"/>
    </location>
</feature>
<feature type="region of interest" description="Disordered" evidence="2">
    <location>
        <begin position="947"/>
        <end position="996"/>
    </location>
</feature>
<feature type="short sequence motif" description="RRK motif; mediates NuRD recruitment to telomeres" evidence="3">
    <location>
        <begin position="3"/>
        <end position="5"/>
    </location>
</feature>
<feature type="compositionally biased region" description="Basic and acidic residues" evidence="2">
    <location>
        <begin position="1"/>
        <end position="10"/>
    </location>
</feature>
<feature type="compositionally biased region" description="Polar residues" evidence="2">
    <location>
        <begin position="62"/>
        <end position="77"/>
    </location>
</feature>
<feature type="compositionally biased region" description="Pro residues" evidence="2">
    <location>
        <begin position="327"/>
        <end position="344"/>
    </location>
</feature>
<feature type="compositionally biased region" description="Basic and acidic residues" evidence="2">
    <location>
        <begin position="947"/>
        <end position="960"/>
    </location>
</feature>
<feature type="compositionally biased region" description="Low complexity" evidence="2">
    <location>
        <begin position="961"/>
        <end position="978"/>
    </location>
</feature>
<feature type="compositionally biased region" description="Basic and acidic residues" evidence="2">
    <location>
        <begin position="979"/>
        <end position="988"/>
    </location>
</feature>
<feature type="cross-link" description="Glycyl lysine isopeptide (Lys-Gly) (interchain with G-Cter in SUMO2)" evidence="15">
    <location>
        <position position="176"/>
    </location>
</feature>
<feature type="cross-link" description="Glycyl lysine isopeptide (Lys-Gly) (interchain with G-Cter in SUMO2)" evidence="15">
    <location>
        <position position="216"/>
    </location>
</feature>
<feature type="cross-link" description="Glycyl lysine isopeptide (Lys-Gly) (interchain with G-Cter in SUMO2)" evidence="15">
    <location>
        <position position="226"/>
    </location>
</feature>
<feature type="cross-link" description="Glycyl lysine isopeptide (Lys-Gly) (interchain with G-Cter in SUMO2)" evidence="15">
    <location>
        <position position="360"/>
    </location>
</feature>
<feature type="cross-link" description="Glycyl lysine isopeptide (Lys-Gly) (interchain with G-Cter in SUMO2)" evidence="15">
    <location>
        <position position="372"/>
    </location>
</feature>
<feature type="cross-link" description="Glycyl lysine isopeptide (Lys-Gly) (interchain with G-Cter in SUMO2)" evidence="12 13 14 15">
    <location>
        <position position="466"/>
    </location>
</feature>
<feature type="cross-link" description="Glycyl lysine isopeptide (Lys-Gly) (interchain with G-Cter in SUMO2)" evidence="15">
    <location>
        <position position="475"/>
    </location>
</feature>
<feature type="cross-link" description="Glycyl lysine isopeptide (Lys-Gly) (interchain with G-Cter in SUMO2)" evidence="12 14">
    <location>
        <position position="523"/>
    </location>
</feature>
<feature type="cross-link" description="Glycyl lysine isopeptide (Lys-Gly) (interchain with G-Cter in SUMO2)" evidence="15">
    <location>
        <position position="549"/>
    </location>
</feature>
<feature type="cross-link" description="Glycyl lysine isopeptide (Lys-Gly) (interchain with G-Cter in SUMO2)" evidence="15">
    <location>
        <position position="580"/>
    </location>
</feature>
<feature type="cross-link" description="Glycyl lysine isopeptide (Lys-Gly) (interchain with G-Cter in SUMO2)" evidence="15">
    <location>
        <position position="587"/>
    </location>
</feature>
<feature type="cross-link" description="Glycyl lysine isopeptide (Lys-Gly) (interchain with G-Cter in SUMO2)" evidence="13">
    <location>
        <position position="597"/>
    </location>
</feature>
<feature type="cross-link" description="Glycyl lysine isopeptide (Lys-Gly) (interchain with G-Cter in SUMO2)" evidence="15">
    <location>
        <position position="634"/>
    </location>
</feature>
<feature type="cross-link" description="Glycyl lysine isopeptide (Lys-Gly) (interchain with G-Cter in SUMO2)" evidence="15">
    <location>
        <position position="639"/>
    </location>
</feature>
<feature type="cross-link" description="Glycyl lysine isopeptide (Lys-Gly) (interchain with G-Cter in SUMO2)" evidence="15">
    <location>
        <position position="658"/>
    </location>
</feature>
<feature type="cross-link" description="Glycyl lysine isopeptide (Lys-Gly) (interchain with G-Cter in SUMO1); alternate" evidence="11">
    <location>
        <position position="673"/>
    </location>
</feature>
<feature type="cross-link" description="Glycyl lysine isopeptide (Lys-Gly) (interchain with G-Cter in SUMO2); alternate" evidence="11 12 13 15">
    <location>
        <position position="673"/>
    </location>
</feature>
<feature type="cross-link" description="Glycyl lysine isopeptide (Lys-Gly) (interchain with G-Cter in SUMO2)" evidence="13 15">
    <location>
        <position position="704"/>
    </location>
</feature>
<feature type="cross-link" description="Glycyl lysine isopeptide (Lys-Gly) (interchain with G-Cter in SUMO2)" evidence="15">
    <location>
        <position position="710"/>
    </location>
</feature>
<feature type="cross-link" description="Glycyl lysine isopeptide (Lys-Gly) (interchain with G-Cter in SUMO2)" evidence="15">
    <location>
        <position position="742"/>
    </location>
</feature>
<feature type="cross-link" description="Glycyl lysine isopeptide (Lys-Gly) (interchain with G-Cter in SUMO2)" evidence="15">
    <location>
        <position position="778"/>
    </location>
</feature>
<feature type="cross-link" description="Glycyl lysine isopeptide (Lys-Gly) (interchain with G-Cter in SUMO2)" evidence="15">
    <location>
        <position position="798"/>
    </location>
</feature>
<feature type="cross-link" description="Glycyl lysine isopeptide (Lys-Gly) (interchain with G-Cter in SUMO2)" evidence="15">
    <location>
        <position position="870"/>
    </location>
</feature>
<feature type="cross-link" description="Glycyl lysine isopeptide (Lys-Gly) (interchain with G-Cter in SUMO2)" evidence="15">
    <location>
        <position position="891"/>
    </location>
</feature>
<feature type="cross-link" description="Glycyl lysine isopeptide (Lys-Gly) (interchain with G-Cter in SUMO2)" evidence="15">
    <location>
        <position position="958"/>
    </location>
</feature>
<feature type="cross-link" description="Glycyl lysine isopeptide (Lys-Gly) (interchain with G-Cter in SUMO2)" evidence="15">
    <location>
        <position position="1014"/>
    </location>
</feature>
<feature type="splice variant" id="VSP_032463" description="In isoform 3." evidence="7">
    <location>
        <begin position="16"/>
        <end position="365"/>
    </location>
</feature>
<feature type="splice variant" id="VSP_032464" description="In isoform 2." evidence="6">
    <original>N</original>
    <variation>K</variation>
    <location>
        <position position="1077"/>
    </location>
</feature>
<feature type="splice variant" id="VSP_032465" description="In isoform 2." evidence="6">
    <location>
        <begin position="1078"/>
        <end position="1081"/>
    </location>
</feature>
<feature type="mutagenesis site" description="Loss of function in NuRD complex recruitment to telomeric regions." evidence="3">
    <location>
        <begin position="3"/>
        <end position="5"/>
    </location>
</feature>
<feature type="mutagenesis site" description="Decreased interaction with RBBP4." evidence="4">
    <original>R</original>
    <variation>A</variation>
    <variation>K</variation>
    <location>
        <position position="4"/>
    </location>
</feature>
<feature type="mutagenesis site" description="Decreased interaction with RBBP4." evidence="4">
    <original>K</original>
    <variation>A</variation>
    <variation>R</variation>
    <location>
        <position position="5"/>
    </location>
</feature>
<feature type="mutagenesis site" description="Decreased interaction with RBBP4." evidence="4">
    <original>Q</original>
    <variation>A</variation>
    <location>
        <position position="6"/>
    </location>
</feature>
<feature type="mutagenesis site" description="Decreased interaction with RBBP4." evidence="4">
    <original>P</original>
    <variation>A</variation>
    <location>
        <position position="9"/>
    </location>
</feature>
<feature type="mutagenesis site" description="Decreased interaction with RBBP4." evidence="4">
    <original>R</original>
    <variation>A</variation>
    <location>
        <position position="11"/>
    </location>
</feature>
<feature type="sequence conflict" description="In Ref. 1; AAP97679." evidence="8" ref="1">
    <original>H</original>
    <variation>P</variation>
    <location>
        <position position="15"/>
    </location>
</feature>
<feature type="sequence conflict" description="In Ref. 2; BAC03591." evidence="8" ref="2">
    <original>T</original>
    <variation>A</variation>
    <location>
        <position position="39"/>
    </location>
</feature>
<feature type="sequence conflict" description="In Ref. 2; BAC03591." evidence="8" ref="2">
    <original>Q</original>
    <variation>R</variation>
    <location>
        <position position="164"/>
    </location>
</feature>
<feature type="sequence conflict" description="In Ref. 2; BAC03591." evidence="8" ref="2">
    <original>F</original>
    <variation>L</variation>
    <location>
        <position position="240"/>
    </location>
</feature>
<feature type="sequence conflict" description="In Ref. 1; AAP97679." evidence="8" ref="1">
    <original>N</original>
    <variation>D</variation>
    <location>
        <position position="859"/>
    </location>
</feature>
<feature type="sequence conflict" description="In Ref. 2; BAC03591." evidence="8" ref="2">
    <original>E</original>
    <variation>G</variation>
    <location>
        <position position="905"/>
    </location>
</feature>
<keyword id="KW-0002">3D-structure</keyword>
<keyword id="KW-0025">Alternative splicing</keyword>
<keyword id="KW-0158">Chromosome</keyword>
<keyword id="KW-0238">DNA-binding</keyword>
<keyword id="KW-1017">Isopeptide bond</keyword>
<keyword id="KW-0479">Metal-binding</keyword>
<keyword id="KW-0539">Nucleus</keyword>
<keyword id="KW-1267">Proteomics identification</keyword>
<keyword id="KW-1185">Reference proteome</keyword>
<keyword id="KW-0677">Repeat</keyword>
<keyword id="KW-0779">Telomere</keyword>
<keyword id="KW-0804">Transcription</keyword>
<keyword id="KW-0805">Transcription regulation</keyword>
<keyword id="KW-0832">Ubl conjugation</keyword>
<keyword id="KW-0862">Zinc</keyword>
<keyword id="KW-0863">Zinc-finger</keyword>